<dbReference type="EMBL" id="AL591688">
    <property type="protein sequence ID" value="CAC47353.1"/>
    <property type="molecule type" value="Genomic_DNA"/>
</dbReference>
<dbReference type="RefSeq" id="NP_386880.1">
    <property type="nucleotide sequence ID" value="NC_003047.1"/>
</dbReference>
<dbReference type="RefSeq" id="WP_010970183.1">
    <property type="nucleotide sequence ID" value="NC_003047.1"/>
</dbReference>
<dbReference type="SMR" id="P58470"/>
<dbReference type="EnsemblBacteria" id="CAC47353">
    <property type="protein sequence ID" value="CAC47353"/>
    <property type="gene ID" value="SMc03990"/>
</dbReference>
<dbReference type="GeneID" id="89577190"/>
<dbReference type="KEGG" id="sme:SMc03990"/>
<dbReference type="PATRIC" id="fig|266834.11.peg.4285"/>
<dbReference type="eggNOG" id="COG0254">
    <property type="taxonomic scope" value="Bacteria"/>
</dbReference>
<dbReference type="HOGENOM" id="CLU_114306_3_2_5"/>
<dbReference type="OrthoDB" id="9803251at2"/>
<dbReference type="Proteomes" id="UP000001976">
    <property type="component" value="Chromosome"/>
</dbReference>
<dbReference type="GO" id="GO:1990904">
    <property type="term" value="C:ribonucleoprotein complex"/>
    <property type="evidence" value="ECO:0007669"/>
    <property type="project" value="UniProtKB-KW"/>
</dbReference>
<dbReference type="GO" id="GO:0005840">
    <property type="term" value="C:ribosome"/>
    <property type="evidence" value="ECO:0007669"/>
    <property type="project" value="UniProtKB-KW"/>
</dbReference>
<dbReference type="GO" id="GO:0019843">
    <property type="term" value="F:rRNA binding"/>
    <property type="evidence" value="ECO:0007669"/>
    <property type="project" value="UniProtKB-KW"/>
</dbReference>
<dbReference type="GO" id="GO:0003735">
    <property type="term" value="F:structural constituent of ribosome"/>
    <property type="evidence" value="ECO:0007669"/>
    <property type="project" value="InterPro"/>
</dbReference>
<dbReference type="GO" id="GO:0006412">
    <property type="term" value="P:translation"/>
    <property type="evidence" value="ECO:0007669"/>
    <property type="project" value="UniProtKB-UniRule"/>
</dbReference>
<dbReference type="Gene3D" id="4.10.830.30">
    <property type="entry name" value="Ribosomal protein L31"/>
    <property type="match status" value="1"/>
</dbReference>
<dbReference type="HAMAP" id="MF_00501">
    <property type="entry name" value="Ribosomal_bL31_1"/>
    <property type="match status" value="1"/>
</dbReference>
<dbReference type="InterPro" id="IPR034704">
    <property type="entry name" value="Ribosomal_bL28/bL31-like_sf"/>
</dbReference>
<dbReference type="InterPro" id="IPR002150">
    <property type="entry name" value="Ribosomal_bL31"/>
</dbReference>
<dbReference type="InterPro" id="IPR027491">
    <property type="entry name" value="Ribosomal_bL31_A"/>
</dbReference>
<dbReference type="InterPro" id="IPR042105">
    <property type="entry name" value="Ribosomal_bL31_sf"/>
</dbReference>
<dbReference type="NCBIfam" id="TIGR00105">
    <property type="entry name" value="L31"/>
    <property type="match status" value="1"/>
</dbReference>
<dbReference type="NCBIfam" id="NF001809">
    <property type="entry name" value="PRK00528.1"/>
    <property type="match status" value="1"/>
</dbReference>
<dbReference type="PANTHER" id="PTHR33280">
    <property type="entry name" value="50S RIBOSOMAL PROTEIN L31, CHLOROPLASTIC"/>
    <property type="match status" value="1"/>
</dbReference>
<dbReference type="PANTHER" id="PTHR33280:SF6">
    <property type="entry name" value="LARGE RIBOSOMAL SUBUNIT PROTEIN BL31A"/>
    <property type="match status" value="1"/>
</dbReference>
<dbReference type="Pfam" id="PF01197">
    <property type="entry name" value="Ribosomal_L31"/>
    <property type="match status" value="1"/>
</dbReference>
<dbReference type="PRINTS" id="PR01249">
    <property type="entry name" value="RIBOSOMALL31"/>
</dbReference>
<dbReference type="SUPFAM" id="SSF143800">
    <property type="entry name" value="L28p-like"/>
    <property type="match status" value="1"/>
</dbReference>
<dbReference type="PROSITE" id="PS01143">
    <property type="entry name" value="RIBOSOMAL_L31"/>
    <property type="match status" value="1"/>
</dbReference>
<protein>
    <recommendedName>
        <fullName evidence="1">Large ribosomal subunit protein bL31</fullName>
    </recommendedName>
    <alternativeName>
        <fullName evidence="2">50S ribosomal protein L31</fullName>
    </alternativeName>
</protein>
<proteinExistence type="inferred from homology"/>
<comment type="function">
    <text evidence="1">Binds the 23S rRNA.</text>
</comment>
<comment type="subunit">
    <text evidence="1">Part of the 50S ribosomal subunit.</text>
</comment>
<comment type="similarity">
    <text evidence="1">Belongs to the bacterial ribosomal protein bL31 family. Type A subfamily.</text>
</comment>
<accession>P58470</accession>
<sequence length="73" mass="8192">MKADIHPDYHTIKVVMTDGTEYETRSTWGTEGATMNLEIDPKSHPAWTGGNQQLVDRGGRVSKFKKRFEGLGL</sequence>
<evidence type="ECO:0000255" key="1">
    <source>
        <dbReference type="HAMAP-Rule" id="MF_00501"/>
    </source>
</evidence>
<evidence type="ECO:0000305" key="2"/>
<gene>
    <name evidence="1" type="primary">rpmE</name>
    <name type="ordered locus">R02774</name>
    <name type="ORF">SMc03990</name>
</gene>
<name>RL31_RHIME</name>
<feature type="chain" id="PRO_0000173151" description="Large ribosomal subunit protein bL31">
    <location>
        <begin position="1"/>
        <end position="73"/>
    </location>
</feature>
<keyword id="KW-1185">Reference proteome</keyword>
<keyword id="KW-0687">Ribonucleoprotein</keyword>
<keyword id="KW-0689">Ribosomal protein</keyword>
<keyword id="KW-0694">RNA-binding</keyword>
<keyword id="KW-0699">rRNA-binding</keyword>
<reference key="1">
    <citation type="journal article" date="2001" name="Proc. Natl. Acad. Sci. U.S.A.">
        <title>Analysis of the chromosome sequence of the legume symbiont Sinorhizobium meliloti strain 1021.</title>
        <authorList>
            <person name="Capela D."/>
            <person name="Barloy-Hubler F."/>
            <person name="Gouzy J."/>
            <person name="Bothe G."/>
            <person name="Ampe F."/>
            <person name="Batut J."/>
            <person name="Boistard P."/>
            <person name="Becker A."/>
            <person name="Boutry M."/>
            <person name="Cadieu E."/>
            <person name="Dreano S."/>
            <person name="Gloux S."/>
            <person name="Godrie T."/>
            <person name="Goffeau A."/>
            <person name="Kahn D."/>
            <person name="Kiss E."/>
            <person name="Lelaure V."/>
            <person name="Masuy D."/>
            <person name="Pohl T."/>
            <person name="Portetelle D."/>
            <person name="Puehler A."/>
            <person name="Purnelle B."/>
            <person name="Ramsperger U."/>
            <person name="Renard C."/>
            <person name="Thebault P."/>
            <person name="Vandenbol M."/>
            <person name="Weidner S."/>
            <person name="Galibert F."/>
        </authorList>
    </citation>
    <scope>NUCLEOTIDE SEQUENCE [LARGE SCALE GENOMIC DNA]</scope>
    <source>
        <strain>1021</strain>
    </source>
</reference>
<reference key="2">
    <citation type="journal article" date="2001" name="Science">
        <title>The composite genome of the legume symbiont Sinorhizobium meliloti.</title>
        <authorList>
            <person name="Galibert F."/>
            <person name="Finan T.M."/>
            <person name="Long S.R."/>
            <person name="Puehler A."/>
            <person name="Abola P."/>
            <person name="Ampe F."/>
            <person name="Barloy-Hubler F."/>
            <person name="Barnett M.J."/>
            <person name="Becker A."/>
            <person name="Boistard P."/>
            <person name="Bothe G."/>
            <person name="Boutry M."/>
            <person name="Bowser L."/>
            <person name="Buhrmester J."/>
            <person name="Cadieu E."/>
            <person name="Capela D."/>
            <person name="Chain P."/>
            <person name="Cowie A."/>
            <person name="Davis R.W."/>
            <person name="Dreano S."/>
            <person name="Federspiel N.A."/>
            <person name="Fisher R.F."/>
            <person name="Gloux S."/>
            <person name="Godrie T."/>
            <person name="Goffeau A."/>
            <person name="Golding B."/>
            <person name="Gouzy J."/>
            <person name="Gurjal M."/>
            <person name="Hernandez-Lucas I."/>
            <person name="Hong A."/>
            <person name="Huizar L."/>
            <person name="Hyman R.W."/>
            <person name="Jones T."/>
            <person name="Kahn D."/>
            <person name="Kahn M.L."/>
            <person name="Kalman S."/>
            <person name="Keating D.H."/>
            <person name="Kiss E."/>
            <person name="Komp C."/>
            <person name="Lelaure V."/>
            <person name="Masuy D."/>
            <person name="Palm C."/>
            <person name="Peck M.C."/>
            <person name="Pohl T.M."/>
            <person name="Portetelle D."/>
            <person name="Purnelle B."/>
            <person name="Ramsperger U."/>
            <person name="Surzycki R."/>
            <person name="Thebault P."/>
            <person name="Vandenbol M."/>
            <person name="Vorhoelter F.J."/>
            <person name="Weidner S."/>
            <person name="Wells D.H."/>
            <person name="Wong K."/>
            <person name="Yeh K.-C."/>
            <person name="Batut J."/>
        </authorList>
    </citation>
    <scope>NUCLEOTIDE SEQUENCE [LARGE SCALE GENOMIC DNA]</scope>
    <source>
        <strain>1021</strain>
    </source>
</reference>
<organism>
    <name type="scientific">Rhizobium meliloti (strain 1021)</name>
    <name type="common">Ensifer meliloti</name>
    <name type="synonym">Sinorhizobium meliloti</name>
    <dbReference type="NCBI Taxonomy" id="266834"/>
    <lineage>
        <taxon>Bacteria</taxon>
        <taxon>Pseudomonadati</taxon>
        <taxon>Pseudomonadota</taxon>
        <taxon>Alphaproteobacteria</taxon>
        <taxon>Hyphomicrobiales</taxon>
        <taxon>Rhizobiaceae</taxon>
        <taxon>Sinorhizobium/Ensifer group</taxon>
        <taxon>Sinorhizobium</taxon>
    </lineage>
</organism>